<feature type="chain" id="PRO_1000013628" description="Ion-translocating oxidoreductase complex subunit D">
    <location>
        <begin position="1"/>
        <end position="350"/>
    </location>
</feature>
<feature type="transmembrane region" description="Helical" evidence="1">
    <location>
        <begin position="36"/>
        <end position="56"/>
    </location>
</feature>
<feature type="transmembrane region" description="Helical" evidence="1">
    <location>
        <begin position="89"/>
        <end position="109"/>
    </location>
</feature>
<feature type="transmembrane region" description="Helical" evidence="1">
    <location>
        <begin position="124"/>
        <end position="144"/>
    </location>
</feature>
<feature type="transmembrane region" description="Helical" evidence="1">
    <location>
        <begin position="212"/>
        <end position="232"/>
    </location>
</feature>
<feature type="transmembrane region" description="Helical" evidence="1">
    <location>
        <begin position="239"/>
        <end position="259"/>
    </location>
</feature>
<feature type="transmembrane region" description="Helical" evidence="1">
    <location>
        <begin position="265"/>
        <end position="285"/>
    </location>
</feature>
<feature type="transmembrane region" description="Helical" evidence="1">
    <location>
        <begin position="298"/>
        <end position="318"/>
    </location>
</feature>
<feature type="transmembrane region" description="Helical" evidence="1">
    <location>
        <begin position="319"/>
        <end position="339"/>
    </location>
</feature>
<feature type="modified residue" description="FMN phosphoryl threonine" evidence="1">
    <location>
        <position position="185"/>
    </location>
</feature>
<reference key="1">
    <citation type="submission" date="2007-03" db="EMBL/GenBank/DDBJ databases">
        <title>Complete sequence of Shewanella loihica PV-4.</title>
        <authorList>
            <consortium name="US DOE Joint Genome Institute"/>
            <person name="Copeland A."/>
            <person name="Lucas S."/>
            <person name="Lapidus A."/>
            <person name="Barry K."/>
            <person name="Detter J.C."/>
            <person name="Glavina del Rio T."/>
            <person name="Hammon N."/>
            <person name="Israni S."/>
            <person name="Dalin E."/>
            <person name="Tice H."/>
            <person name="Pitluck S."/>
            <person name="Chain P."/>
            <person name="Malfatti S."/>
            <person name="Shin M."/>
            <person name="Vergez L."/>
            <person name="Schmutz J."/>
            <person name="Larimer F."/>
            <person name="Land M."/>
            <person name="Hauser L."/>
            <person name="Kyrpides N."/>
            <person name="Mikhailova N."/>
            <person name="Romine M.F."/>
            <person name="Serres G."/>
            <person name="Fredrickson J."/>
            <person name="Tiedje J."/>
            <person name="Richardson P."/>
        </authorList>
    </citation>
    <scope>NUCLEOTIDE SEQUENCE [LARGE SCALE GENOMIC DNA]</scope>
    <source>
        <strain>ATCC BAA-1088 / PV-4</strain>
    </source>
</reference>
<organism>
    <name type="scientific">Shewanella loihica (strain ATCC BAA-1088 / PV-4)</name>
    <dbReference type="NCBI Taxonomy" id="323850"/>
    <lineage>
        <taxon>Bacteria</taxon>
        <taxon>Pseudomonadati</taxon>
        <taxon>Pseudomonadota</taxon>
        <taxon>Gammaproteobacteria</taxon>
        <taxon>Alteromonadales</taxon>
        <taxon>Shewanellaceae</taxon>
        <taxon>Shewanella</taxon>
    </lineage>
</organism>
<sequence>MAFKLASSPHLSTKAQTRGLMFKVMLCALPGALAQCYFFGWGTLIQIALAIAIAVATEAAVLKLRARPVGKTIRDNSAALTGLLIGVAIPALAPWWIAAIGVIFAILVVKQLYGGLGNNIFNPAMAAYVMLLISFPMQMTTWVAPSGAALHDLGLMQSLSVIFQGADAEQVLAYRAGIDGVTMATPLDAVKTGLSTGLTLDEILTKASFSDGFGIGWALINLAYLAGGLVMLKLKLIRWQISTAILASLFVCASIGYLLSPDTHMGPLLHLFSGATMLAAFFIATDPVTAATSTRGRLIFGSLIGLLVYLIRSFCGYPDAFAFAVLLANLCAPFIDYYVKPRAYGHRASR</sequence>
<accession>A3QEN7</accession>
<dbReference type="EC" id="7.-.-.-" evidence="1"/>
<dbReference type="EMBL" id="CP000606">
    <property type="protein sequence ID" value="ABO23935.1"/>
    <property type="molecule type" value="Genomic_DNA"/>
</dbReference>
<dbReference type="RefSeq" id="WP_011865867.1">
    <property type="nucleotide sequence ID" value="NC_009092.1"/>
</dbReference>
<dbReference type="SMR" id="A3QEN7"/>
<dbReference type="STRING" id="323850.Shew_2069"/>
<dbReference type="KEGG" id="slo:Shew_2069"/>
<dbReference type="eggNOG" id="COG4658">
    <property type="taxonomic scope" value="Bacteria"/>
</dbReference>
<dbReference type="HOGENOM" id="CLU_042020_0_0_6"/>
<dbReference type="OrthoDB" id="9776359at2"/>
<dbReference type="Proteomes" id="UP000001558">
    <property type="component" value="Chromosome"/>
</dbReference>
<dbReference type="GO" id="GO:0005886">
    <property type="term" value="C:plasma membrane"/>
    <property type="evidence" value="ECO:0007669"/>
    <property type="project" value="UniProtKB-SubCell"/>
</dbReference>
<dbReference type="GO" id="GO:0022900">
    <property type="term" value="P:electron transport chain"/>
    <property type="evidence" value="ECO:0007669"/>
    <property type="project" value="UniProtKB-UniRule"/>
</dbReference>
<dbReference type="GO" id="GO:0055085">
    <property type="term" value="P:transmembrane transport"/>
    <property type="evidence" value="ECO:0007669"/>
    <property type="project" value="InterPro"/>
</dbReference>
<dbReference type="HAMAP" id="MF_00462">
    <property type="entry name" value="RsxD_RnfD"/>
    <property type="match status" value="1"/>
</dbReference>
<dbReference type="InterPro" id="IPR004338">
    <property type="entry name" value="NqrB/RnfD"/>
</dbReference>
<dbReference type="InterPro" id="IPR011303">
    <property type="entry name" value="RnfD_bac"/>
</dbReference>
<dbReference type="NCBIfam" id="NF002011">
    <property type="entry name" value="PRK00816.1"/>
    <property type="match status" value="1"/>
</dbReference>
<dbReference type="NCBIfam" id="TIGR01946">
    <property type="entry name" value="rnfD"/>
    <property type="match status" value="1"/>
</dbReference>
<dbReference type="PANTHER" id="PTHR30578">
    <property type="entry name" value="ELECTRON TRANSPORT COMPLEX PROTEIN RNFD"/>
    <property type="match status" value="1"/>
</dbReference>
<dbReference type="PANTHER" id="PTHR30578:SF0">
    <property type="entry name" value="ION-TRANSLOCATING OXIDOREDUCTASE COMPLEX SUBUNIT D"/>
    <property type="match status" value="1"/>
</dbReference>
<dbReference type="Pfam" id="PF03116">
    <property type="entry name" value="NQR2_RnfD_RnfE"/>
    <property type="match status" value="1"/>
</dbReference>
<keyword id="KW-0997">Cell inner membrane</keyword>
<keyword id="KW-1003">Cell membrane</keyword>
<keyword id="KW-0249">Electron transport</keyword>
<keyword id="KW-0285">Flavoprotein</keyword>
<keyword id="KW-0288">FMN</keyword>
<keyword id="KW-0472">Membrane</keyword>
<keyword id="KW-0597">Phosphoprotein</keyword>
<keyword id="KW-1185">Reference proteome</keyword>
<keyword id="KW-1278">Translocase</keyword>
<keyword id="KW-0812">Transmembrane</keyword>
<keyword id="KW-1133">Transmembrane helix</keyword>
<keyword id="KW-0813">Transport</keyword>
<gene>
    <name evidence="1" type="primary">rnfD</name>
    <name type="ordered locus">Shew_2069</name>
</gene>
<comment type="function">
    <text evidence="1">Part of a membrane-bound complex that couples electron transfer with translocation of ions across the membrane.</text>
</comment>
<comment type="cofactor">
    <cofactor evidence="1">
        <name>FMN</name>
        <dbReference type="ChEBI" id="CHEBI:58210"/>
    </cofactor>
</comment>
<comment type="subunit">
    <text evidence="1">The complex is composed of six subunits: RnfA, RnfB, RnfC, RnfD, RnfE and RnfG.</text>
</comment>
<comment type="subcellular location">
    <subcellularLocation>
        <location evidence="1">Cell inner membrane</location>
        <topology evidence="1">Multi-pass membrane protein</topology>
    </subcellularLocation>
</comment>
<comment type="similarity">
    <text evidence="1">Belongs to the NqrB/RnfD family.</text>
</comment>
<evidence type="ECO:0000255" key="1">
    <source>
        <dbReference type="HAMAP-Rule" id="MF_00462"/>
    </source>
</evidence>
<name>RNFD_SHELP</name>
<protein>
    <recommendedName>
        <fullName evidence="1">Ion-translocating oxidoreductase complex subunit D</fullName>
        <ecNumber evidence="1">7.-.-.-</ecNumber>
    </recommendedName>
    <alternativeName>
        <fullName evidence="1">Rnf electron transport complex subunit D</fullName>
    </alternativeName>
</protein>
<proteinExistence type="inferred from homology"/>